<sequence>MAKMAKTFVVTLKRSTIKCTQDQKDAVRVLGLKKIRQTVEVKDSAAARGNIMKVQHLIDVEVKG</sequence>
<proteinExistence type="inferred from homology"/>
<gene>
    <name evidence="1" type="primary">rpmD</name>
    <name type="ordered locus">Bd2957</name>
</gene>
<reference key="1">
    <citation type="journal article" date="2004" name="Science">
        <title>A predator unmasked: life cycle of Bdellovibrio bacteriovorus from a genomic perspective.</title>
        <authorList>
            <person name="Rendulic S."/>
            <person name="Jagtap P."/>
            <person name="Rosinus A."/>
            <person name="Eppinger M."/>
            <person name="Baar C."/>
            <person name="Lanz C."/>
            <person name="Keller H."/>
            <person name="Lambert C."/>
            <person name="Evans K.J."/>
            <person name="Goesmann A."/>
            <person name="Meyer F."/>
            <person name="Sockett R.E."/>
            <person name="Schuster S.C."/>
        </authorList>
    </citation>
    <scope>NUCLEOTIDE SEQUENCE [LARGE SCALE GENOMIC DNA]</scope>
    <source>
        <strain>ATCC 15356 / DSM 50701 / NCIMB 9529 / HD100</strain>
    </source>
</reference>
<dbReference type="EMBL" id="BX842654">
    <property type="protein sequence ID" value="CAE80732.1"/>
    <property type="molecule type" value="Genomic_DNA"/>
</dbReference>
<dbReference type="SMR" id="Q6MJ30"/>
<dbReference type="STRING" id="264462.Bd2957"/>
<dbReference type="KEGG" id="bba:Bd2957"/>
<dbReference type="eggNOG" id="COG1841">
    <property type="taxonomic scope" value="Bacteria"/>
</dbReference>
<dbReference type="HOGENOM" id="CLU_131047_1_3_7"/>
<dbReference type="Proteomes" id="UP000008080">
    <property type="component" value="Chromosome"/>
</dbReference>
<dbReference type="GO" id="GO:0022625">
    <property type="term" value="C:cytosolic large ribosomal subunit"/>
    <property type="evidence" value="ECO:0007669"/>
    <property type="project" value="TreeGrafter"/>
</dbReference>
<dbReference type="GO" id="GO:0003735">
    <property type="term" value="F:structural constituent of ribosome"/>
    <property type="evidence" value="ECO:0007669"/>
    <property type="project" value="InterPro"/>
</dbReference>
<dbReference type="GO" id="GO:0006412">
    <property type="term" value="P:translation"/>
    <property type="evidence" value="ECO:0007669"/>
    <property type="project" value="InterPro"/>
</dbReference>
<dbReference type="CDD" id="cd01658">
    <property type="entry name" value="Ribosomal_L30"/>
    <property type="match status" value="1"/>
</dbReference>
<dbReference type="Gene3D" id="3.30.1390.20">
    <property type="entry name" value="Ribosomal protein L30, ferredoxin-like fold domain"/>
    <property type="match status" value="1"/>
</dbReference>
<dbReference type="HAMAP" id="MF_01371_B">
    <property type="entry name" value="Ribosomal_uL30_B"/>
    <property type="match status" value="1"/>
</dbReference>
<dbReference type="InterPro" id="IPR036919">
    <property type="entry name" value="Ribo_uL30_ferredoxin-like_sf"/>
</dbReference>
<dbReference type="InterPro" id="IPR005996">
    <property type="entry name" value="Ribosomal_uL30_bac-type"/>
</dbReference>
<dbReference type="InterPro" id="IPR018038">
    <property type="entry name" value="Ribosomal_uL30_CS"/>
</dbReference>
<dbReference type="InterPro" id="IPR016082">
    <property type="entry name" value="Ribosomal_uL30_ferredoxin-like"/>
</dbReference>
<dbReference type="NCBIfam" id="TIGR01308">
    <property type="entry name" value="rpmD_bact"/>
    <property type="match status" value="1"/>
</dbReference>
<dbReference type="PANTHER" id="PTHR15892:SF2">
    <property type="entry name" value="LARGE RIBOSOMAL SUBUNIT PROTEIN UL30M"/>
    <property type="match status" value="1"/>
</dbReference>
<dbReference type="PANTHER" id="PTHR15892">
    <property type="entry name" value="MITOCHONDRIAL RIBOSOMAL PROTEIN L30"/>
    <property type="match status" value="1"/>
</dbReference>
<dbReference type="Pfam" id="PF00327">
    <property type="entry name" value="Ribosomal_L30"/>
    <property type="match status" value="1"/>
</dbReference>
<dbReference type="PIRSF" id="PIRSF002211">
    <property type="entry name" value="Ribosomal_L30_bac-type"/>
    <property type="match status" value="1"/>
</dbReference>
<dbReference type="SUPFAM" id="SSF55129">
    <property type="entry name" value="Ribosomal protein L30p/L7e"/>
    <property type="match status" value="1"/>
</dbReference>
<dbReference type="PROSITE" id="PS00634">
    <property type="entry name" value="RIBOSOMAL_L30"/>
    <property type="match status" value="1"/>
</dbReference>
<organism>
    <name type="scientific">Bdellovibrio bacteriovorus (strain ATCC 15356 / DSM 50701 / NCIMB 9529 / HD100)</name>
    <dbReference type="NCBI Taxonomy" id="264462"/>
    <lineage>
        <taxon>Bacteria</taxon>
        <taxon>Pseudomonadati</taxon>
        <taxon>Bdellovibrionota</taxon>
        <taxon>Bdellovibrionia</taxon>
        <taxon>Bdellovibrionales</taxon>
        <taxon>Pseudobdellovibrionaceae</taxon>
        <taxon>Bdellovibrio</taxon>
    </lineage>
</organism>
<comment type="subunit">
    <text evidence="1">Part of the 50S ribosomal subunit.</text>
</comment>
<comment type="similarity">
    <text evidence="1">Belongs to the universal ribosomal protein uL30 family.</text>
</comment>
<accession>Q6MJ30</accession>
<feature type="chain" id="PRO_1000056013" description="Large ribosomal subunit protein uL30">
    <location>
        <begin position="1"/>
        <end position="64"/>
    </location>
</feature>
<keyword id="KW-1185">Reference proteome</keyword>
<keyword id="KW-0687">Ribonucleoprotein</keyword>
<keyword id="KW-0689">Ribosomal protein</keyword>
<evidence type="ECO:0000255" key="1">
    <source>
        <dbReference type="HAMAP-Rule" id="MF_01371"/>
    </source>
</evidence>
<evidence type="ECO:0000305" key="2"/>
<protein>
    <recommendedName>
        <fullName evidence="1">Large ribosomal subunit protein uL30</fullName>
    </recommendedName>
    <alternativeName>
        <fullName evidence="2">50S ribosomal protein L30</fullName>
    </alternativeName>
</protein>
<name>RL30_BDEBA</name>